<proteinExistence type="evidence at protein level"/>
<dbReference type="EMBL" id="X54937">
    <property type="protein sequence ID" value="CAA38699.1"/>
    <property type="molecule type" value="mRNA"/>
</dbReference>
<dbReference type="EMBL" id="X81120">
    <property type="protein sequence ID" value="CAA57018.1"/>
    <property type="molecule type" value="mRNA"/>
</dbReference>
<dbReference type="EMBL" id="X81121">
    <property type="protein sequence ID" value="CAA57019.1"/>
    <property type="molecule type" value="mRNA"/>
</dbReference>
<dbReference type="EMBL" id="AY766182">
    <property type="protein sequence ID" value="AAV35030.1"/>
    <property type="molecule type" value="mRNA"/>
</dbReference>
<dbReference type="EMBL" id="AF107262">
    <property type="protein sequence ID" value="AAD34320.1"/>
    <property type="molecule type" value="mRNA"/>
</dbReference>
<dbReference type="EMBL" id="U73304">
    <property type="protein sequence ID" value="AAB18200.1"/>
    <property type="molecule type" value="Genomic_DNA"/>
</dbReference>
<dbReference type="EMBL" id="DQ067455">
    <property type="protein sequence ID" value="AAY68486.1"/>
    <property type="molecule type" value="mRNA"/>
</dbReference>
<dbReference type="EMBL" id="AY225225">
    <property type="protein sequence ID" value="AAO67710.1"/>
    <property type="molecule type" value="Genomic_DNA"/>
</dbReference>
<dbReference type="EMBL" id="AL136096">
    <property type="status" value="NOT_ANNOTATED_CDS"/>
    <property type="molecule type" value="Genomic_DNA"/>
</dbReference>
<dbReference type="EMBL" id="AK313908">
    <property type="protein sequence ID" value="BAG36631.1"/>
    <property type="molecule type" value="mRNA"/>
</dbReference>
<dbReference type="EMBL" id="CH471051">
    <property type="protein sequence ID" value="EAW48574.1"/>
    <property type="molecule type" value="Genomic_DNA"/>
</dbReference>
<dbReference type="EMBL" id="CH471051">
    <property type="protein sequence ID" value="EAW48575.1"/>
    <property type="molecule type" value="Genomic_DNA"/>
</dbReference>
<dbReference type="EMBL" id="CH471051">
    <property type="protein sequence ID" value="EAW48576.1"/>
    <property type="molecule type" value="Genomic_DNA"/>
</dbReference>
<dbReference type="EMBL" id="BC074811">
    <property type="protein sequence ID" value="AAH74811.1"/>
    <property type="molecule type" value="mRNA"/>
</dbReference>
<dbReference type="EMBL" id="BC074812">
    <property type="protein sequence ID" value="AAH74812.1"/>
    <property type="molecule type" value="mRNA"/>
</dbReference>
<dbReference type="EMBL" id="BC095513">
    <property type="protein sequence ID" value="AAH95513.1"/>
    <property type="molecule type" value="mRNA"/>
</dbReference>
<dbReference type="EMBL" id="BC100968">
    <property type="protein sequence ID" value="AAI00969.1"/>
    <property type="molecule type" value="mRNA"/>
</dbReference>
<dbReference type="EMBL" id="BC100969">
    <property type="protein sequence ID" value="AAI00970.1"/>
    <property type="molecule type" value="mRNA"/>
</dbReference>
<dbReference type="EMBL" id="BC100970">
    <property type="protein sequence ID" value="AAI00971.1"/>
    <property type="molecule type" value="mRNA"/>
</dbReference>
<dbReference type="EMBL" id="BC100971">
    <property type="protein sequence ID" value="AAI00972.1"/>
    <property type="molecule type" value="mRNA"/>
</dbReference>
<dbReference type="CCDS" id="CCDS5015.1">
    <molecule id="P21554-1"/>
</dbReference>
<dbReference type="CCDS" id="CCDS5016.2">
    <molecule id="P21554-3"/>
</dbReference>
<dbReference type="PIR" id="S17595">
    <property type="entry name" value="S17595"/>
</dbReference>
<dbReference type="RefSeq" id="NP_001153698.1">
    <molecule id="P21554-1"/>
    <property type="nucleotide sequence ID" value="NM_001160226.3"/>
</dbReference>
<dbReference type="RefSeq" id="NP_001153730.1">
    <molecule id="P21554-1"/>
    <property type="nucleotide sequence ID" value="NM_001160258.3"/>
</dbReference>
<dbReference type="RefSeq" id="NP_001153731.1">
    <molecule id="P21554-1"/>
    <property type="nucleotide sequence ID" value="NM_001160259.3"/>
</dbReference>
<dbReference type="RefSeq" id="NP_001352798.1">
    <molecule id="P21554-1"/>
    <property type="nucleotide sequence ID" value="NM_001365869.2"/>
</dbReference>
<dbReference type="RefSeq" id="NP_001352799.1">
    <molecule id="P21554-1"/>
    <property type="nucleotide sequence ID" value="NM_001365870.2"/>
</dbReference>
<dbReference type="RefSeq" id="NP_001352801.1">
    <molecule id="P21554-1"/>
    <property type="nucleotide sequence ID" value="NM_001365872.2"/>
</dbReference>
<dbReference type="RefSeq" id="NP_001352803.1">
    <molecule id="P21554-1"/>
    <property type="nucleotide sequence ID" value="NM_001365874.3"/>
</dbReference>
<dbReference type="RefSeq" id="NP_001357474.1">
    <molecule id="P21554-1"/>
    <property type="nucleotide sequence ID" value="NM_001370545.1"/>
</dbReference>
<dbReference type="RefSeq" id="NP_001357475.1">
    <molecule id="P21554-1"/>
    <property type="nucleotide sequence ID" value="NM_001370546.1"/>
</dbReference>
<dbReference type="RefSeq" id="NP_001357476.1">
    <molecule id="P21554-1"/>
    <property type="nucleotide sequence ID" value="NM_001370547.1"/>
</dbReference>
<dbReference type="RefSeq" id="NP_001411023.1">
    <molecule id="P21554-1"/>
    <property type="nucleotide sequence ID" value="NM_001424094.1"/>
</dbReference>
<dbReference type="RefSeq" id="NP_001411024.1">
    <molecule id="P21554-1"/>
    <property type="nucleotide sequence ID" value="NM_001424095.1"/>
</dbReference>
<dbReference type="RefSeq" id="NP_001411025.1">
    <molecule id="P21554-1"/>
    <property type="nucleotide sequence ID" value="NM_001424096.1"/>
</dbReference>
<dbReference type="RefSeq" id="NP_001411026.1">
    <molecule id="P21554-1"/>
    <property type="nucleotide sequence ID" value="NM_001424097.1"/>
</dbReference>
<dbReference type="RefSeq" id="NP_001411027.1">
    <molecule id="P21554-1"/>
    <property type="nucleotide sequence ID" value="NM_001424098.1"/>
</dbReference>
<dbReference type="RefSeq" id="NP_057167.2">
    <molecule id="P21554-1"/>
    <property type="nucleotide sequence ID" value="NM_016083.4"/>
</dbReference>
<dbReference type="RefSeq" id="NP_149421.2">
    <molecule id="P21554-3"/>
    <property type="nucleotide sequence ID" value="NM_033181.4"/>
</dbReference>
<dbReference type="RefSeq" id="XP_006715393.1">
    <property type="nucleotide sequence ID" value="XM_006715330.3"/>
</dbReference>
<dbReference type="RefSeq" id="XP_011533726.1">
    <property type="nucleotide sequence ID" value="XM_011535424.1"/>
</dbReference>
<dbReference type="RefSeq" id="XP_011533727.1">
    <property type="nucleotide sequence ID" value="XM_011535425.1"/>
</dbReference>
<dbReference type="RefSeq" id="XP_011533728.1">
    <property type="nucleotide sequence ID" value="XM_011535426.1"/>
</dbReference>
<dbReference type="RefSeq" id="XP_011533730.1">
    <property type="nucleotide sequence ID" value="XM_011535428.1"/>
</dbReference>
<dbReference type="RefSeq" id="XP_016865727.1">
    <property type="nucleotide sequence ID" value="XM_017010238.1"/>
</dbReference>
<dbReference type="RefSeq" id="XP_016865728.1">
    <property type="nucleotide sequence ID" value="XM_017010239.1"/>
</dbReference>
<dbReference type="RefSeq" id="XP_016865729.1">
    <property type="nucleotide sequence ID" value="XM_017010240.1"/>
</dbReference>
<dbReference type="RefSeq" id="XP_047274127.1">
    <molecule id="P21554-1"/>
    <property type="nucleotide sequence ID" value="XM_047418171.1"/>
</dbReference>
<dbReference type="RefSeq" id="XP_047274128.1">
    <molecule id="P21554-1"/>
    <property type="nucleotide sequence ID" value="XM_047418172.1"/>
</dbReference>
<dbReference type="RefSeq" id="XP_047274129.1">
    <molecule id="P21554-1"/>
    <property type="nucleotide sequence ID" value="XM_047418173.1"/>
</dbReference>
<dbReference type="RefSeq" id="XP_054210179.1">
    <molecule id="P21554-1"/>
    <property type="nucleotide sequence ID" value="XM_054354204.1"/>
</dbReference>
<dbReference type="RefSeq" id="XP_054210180.1">
    <molecule id="P21554-1"/>
    <property type="nucleotide sequence ID" value="XM_054354205.1"/>
</dbReference>
<dbReference type="RefSeq" id="XP_054210181.1">
    <molecule id="P21554-1"/>
    <property type="nucleotide sequence ID" value="XM_054354206.1"/>
</dbReference>
<dbReference type="PDB" id="1LVQ">
    <property type="method" value="NMR"/>
    <property type="chains" value="A=338-346"/>
</dbReference>
<dbReference type="PDB" id="1LVR">
    <property type="method" value="NMR"/>
    <property type="chains" value="A=338-346"/>
</dbReference>
<dbReference type="PDB" id="2B0Y">
    <property type="method" value="NMR"/>
    <property type="chains" value="A=400-414"/>
</dbReference>
<dbReference type="PDB" id="2KOE">
    <property type="method" value="NMR"/>
    <property type="chains" value="A=377-414"/>
</dbReference>
<dbReference type="PDB" id="2MZ2">
    <property type="method" value="NMR"/>
    <property type="chains" value="A=400-414"/>
</dbReference>
<dbReference type="PDB" id="2MZ3">
    <property type="method" value="NMR"/>
    <property type="chains" value="A=400-414"/>
</dbReference>
<dbReference type="PDB" id="2MZA">
    <property type="method" value="NMR"/>
    <property type="chains" value="A=400-414"/>
</dbReference>
<dbReference type="PDB" id="5TGZ">
    <property type="method" value="X-ray"/>
    <property type="resolution" value="2.80 A"/>
    <property type="chains" value="A=99-306, A=332-414"/>
</dbReference>
<dbReference type="PDB" id="5U09">
    <property type="method" value="X-ray"/>
    <property type="resolution" value="2.60 A"/>
    <property type="chains" value="A=90-301, A=333-421"/>
</dbReference>
<dbReference type="PDB" id="5XR8">
    <property type="method" value="X-ray"/>
    <property type="resolution" value="2.95 A"/>
    <property type="chains" value="A=99-306, A=332-414"/>
</dbReference>
<dbReference type="PDB" id="5XRA">
    <property type="method" value="X-ray"/>
    <property type="resolution" value="2.80 A"/>
    <property type="chains" value="A=99-306, A=332-414"/>
</dbReference>
<dbReference type="PDB" id="6KPG">
    <property type="method" value="EM"/>
    <property type="resolution" value="3.00 A"/>
    <property type="chains" value="R=71-425"/>
</dbReference>
<dbReference type="PDB" id="6KQI">
    <property type="method" value="X-ray"/>
    <property type="resolution" value="3.25 A"/>
    <property type="chains" value="A=94-301, A=334-413"/>
</dbReference>
<dbReference type="PDB" id="6N4B">
    <property type="method" value="EM"/>
    <property type="resolution" value="3.00 A"/>
    <property type="chains" value="R=1-472"/>
</dbReference>
<dbReference type="PDB" id="7FEE">
    <property type="method" value="X-ray"/>
    <property type="resolution" value="2.70 A"/>
    <property type="chains" value="A=74-305, A=333-414"/>
</dbReference>
<dbReference type="PDB" id="7V3Z">
    <property type="method" value="X-ray"/>
    <property type="resolution" value="3.29 A"/>
    <property type="chains" value="A=102-306, A=336-414"/>
</dbReference>
<dbReference type="PDB" id="7WV9">
    <property type="method" value="EM"/>
    <property type="resolution" value="3.36 A"/>
    <property type="chains" value="R=1-472"/>
</dbReference>
<dbReference type="PDB" id="8GAG">
    <property type="method" value="EM"/>
    <property type="resolution" value="3.30 A"/>
    <property type="chains" value="R=1-472"/>
</dbReference>
<dbReference type="PDB" id="8GHV">
    <property type="method" value="EM"/>
    <property type="resolution" value="2.80 A"/>
    <property type="chains" value="D=1-472"/>
</dbReference>
<dbReference type="PDB" id="8IKG">
    <property type="method" value="EM"/>
    <property type="resolution" value="3.40 A"/>
    <property type="chains" value="R=99-408"/>
</dbReference>
<dbReference type="PDB" id="8IKH">
    <property type="method" value="EM"/>
    <property type="resolution" value="3.30 A"/>
    <property type="chains" value="R=99-408"/>
</dbReference>
<dbReference type="PDB" id="8K8J">
    <property type="method" value="EM"/>
    <property type="resolution" value="2.88 A"/>
    <property type="chains" value="R=71-425"/>
</dbReference>
<dbReference type="PDB" id="8WRZ">
    <property type="method" value="EM"/>
    <property type="resolution" value="3.60 A"/>
    <property type="chains" value="R=71-432"/>
</dbReference>
<dbReference type="PDB" id="8WU1">
    <property type="method" value="EM"/>
    <property type="resolution" value="3.20 A"/>
    <property type="chains" value="R=1-413"/>
</dbReference>
<dbReference type="PDB" id="9B54">
    <property type="method" value="EM"/>
    <property type="resolution" value="2.86 A"/>
    <property type="chains" value="R=1-472"/>
</dbReference>
<dbReference type="PDB" id="9B65">
    <property type="method" value="EM"/>
    <property type="resolution" value="3.03 A"/>
    <property type="chains" value="R=1-472"/>
</dbReference>
<dbReference type="PDB" id="9B9Y">
    <property type="method" value="EM"/>
    <property type="resolution" value="3.50 A"/>
    <property type="chains" value="R=96-301, R=334-416"/>
</dbReference>
<dbReference type="PDB" id="9B9Z">
    <property type="method" value="EM"/>
    <property type="resolution" value="3.30 A"/>
    <property type="chains" value="R=96-301, R=334-416"/>
</dbReference>
<dbReference type="PDB" id="9BA0">
    <property type="method" value="EM"/>
    <property type="resolution" value="3.13 A"/>
    <property type="chains" value="R=96-301, R=334-416"/>
</dbReference>
<dbReference type="PDB" id="9ERX">
    <property type="method" value="EM"/>
    <property type="resolution" value="2.90 A"/>
    <property type="chains" value="R=2-472"/>
</dbReference>
<dbReference type="PDBsum" id="1LVQ"/>
<dbReference type="PDBsum" id="1LVR"/>
<dbReference type="PDBsum" id="2B0Y"/>
<dbReference type="PDBsum" id="2KOE"/>
<dbReference type="PDBsum" id="2MZ2"/>
<dbReference type="PDBsum" id="2MZ3"/>
<dbReference type="PDBsum" id="2MZA"/>
<dbReference type="PDBsum" id="5TGZ"/>
<dbReference type="PDBsum" id="5U09"/>
<dbReference type="PDBsum" id="5XR8"/>
<dbReference type="PDBsum" id="5XRA"/>
<dbReference type="PDBsum" id="6KPG"/>
<dbReference type="PDBsum" id="6KQI"/>
<dbReference type="PDBsum" id="6N4B"/>
<dbReference type="PDBsum" id="7FEE"/>
<dbReference type="PDBsum" id="7V3Z"/>
<dbReference type="PDBsum" id="7WV9"/>
<dbReference type="PDBsum" id="8GAG"/>
<dbReference type="PDBsum" id="8GHV"/>
<dbReference type="PDBsum" id="8IKG"/>
<dbReference type="PDBsum" id="8IKH"/>
<dbReference type="PDBsum" id="8K8J"/>
<dbReference type="PDBsum" id="8WRZ"/>
<dbReference type="PDBsum" id="8WU1"/>
<dbReference type="PDBsum" id="9B54"/>
<dbReference type="PDBsum" id="9B65"/>
<dbReference type="PDBsum" id="9B9Y"/>
<dbReference type="PDBsum" id="9B9Z"/>
<dbReference type="PDBsum" id="9BA0"/>
<dbReference type="PDBsum" id="9ERX"/>
<dbReference type="EMDB" id="EMD-0339"/>
<dbReference type="EMDB" id="EMD-0745"/>
<dbReference type="EMDB" id="EMD-19929"/>
<dbReference type="EMDB" id="EMD-29898"/>
<dbReference type="EMDB" id="EMD-32850"/>
<dbReference type="EMDB" id="EMD-35511"/>
<dbReference type="EMDB" id="EMD-35512"/>
<dbReference type="EMDB" id="EMD-36951"/>
<dbReference type="EMDB" id="EMD-37795"/>
<dbReference type="EMDB" id="EMD-40052"/>
<dbReference type="EMDB" id="EMD-44199"/>
<dbReference type="EMDB" id="EMD-44247"/>
<dbReference type="EMDB" id="EMD-44392"/>
<dbReference type="EMDB" id="EMD-44393"/>
<dbReference type="EMDB" id="EMD-44394"/>
<dbReference type="SMR" id="P21554"/>
<dbReference type="BioGRID" id="107668">
    <property type="interactions" value="10"/>
</dbReference>
<dbReference type="CORUM" id="P21554"/>
<dbReference type="DIP" id="DIP-61575N"/>
<dbReference type="FunCoup" id="P21554">
    <property type="interactions" value="1275"/>
</dbReference>
<dbReference type="IntAct" id="P21554">
    <property type="interactions" value="12"/>
</dbReference>
<dbReference type="STRING" id="9606.ENSP00000358513"/>
<dbReference type="BindingDB" id="P21554"/>
<dbReference type="ChEMBL" id="CHEMBL218"/>
<dbReference type="DrugBank" id="DB09061">
    <property type="generic name" value="Cannabidiol"/>
</dbReference>
<dbReference type="DrugBank" id="DB14737">
    <property type="generic name" value="Cannabinol"/>
</dbReference>
<dbReference type="DrugBank" id="DB05750">
    <property type="generic name" value="Drinabant"/>
</dbReference>
<dbReference type="DrugBank" id="DB00470">
    <property type="generic name" value="Dronabinol"/>
</dbReference>
<dbReference type="DrugBank" id="DB14009">
    <property type="generic name" value="Medical Cannabis"/>
</dbReference>
<dbReference type="DrugBank" id="DB00486">
    <property type="generic name" value="Nabilone"/>
</dbReference>
<dbReference type="DrugBank" id="DB14011">
    <property type="generic name" value="Nabiximols"/>
</dbReference>
<dbReference type="DrugBank" id="DB16495">
    <property type="generic name" value="Oleic monoethanolamide"/>
</dbReference>
<dbReference type="DrugBank" id="DB01083">
    <property type="generic name" value="Orlistat"/>
</dbReference>
<dbReference type="DrugBank" id="DB11745">
    <property type="generic name" value="Otenabant"/>
</dbReference>
<dbReference type="DrugBank" id="DB13495">
    <property type="generic name" value="Paraoxon"/>
</dbReference>
<dbReference type="DrugBank" id="DB09288">
    <property type="generic name" value="Propacetamol"/>
</dbReference>
<dbReference type="DrugBank" id="DB02955">
    <property type="generic name" value="Ricinoleic acid"/>
</dbReference>
<dbReference type="DrugBank" id="DB06155">
    <property type="generic name" value="Rimonabant"/>
</dbReference>
<dbReference type="DrugBank" id="DB05077">
    <property type="generic name" value="SLV319"/>
</dbReference>
<dbReference type="DrugBank" id="DB13070">
    <property type="generic name" value="Surinabant"/>
</dbReference>
<dbReference type="DrugBank" id="DB06624">
    <property type="generic name" value="Taranabant"/>
</dbReference>
<dbReference type="DrugBank" id="DB11755">
    <property type="generic name" value="Tetrahydrocannabivarin"/>
</dbReference>
<dbReference type="DrugBank" id="DB05201">
    <property type="generic name" value="V24343"/>
</dbReference>
<dbReference type="DrugBank" id="DB13950">
    <property type="generic name" value="WIN 55212-2"/>
</dbReference>
<dbReference type="DrugCentral" id="P21554"/>
<dbReference type="GuidetoPHARMACOLOGY" id="56"/>
<dbReference type="SwissLipids" id="SLP:000001607"/>
<dbReference type="TCDB" id="9.A.14.2.2">
    <property type="family name" value="the g-protein-coupled receptor (gpcr) family"/>
</dbReference>
<dbReference type="GlyCosmos" id="P21554">
    <property type="glycosylation" value="2 sites, No reported glycans"/>
</dbReference>
<dbReference type="GlyGen" id="P21554">
    <property type="glycosylation" value="3 sites"/>
</dbReference>
<dbReference type="iPTMnet" id="P21554"/>
<dbReference type="PhosphoSitePlus" id="P21554"/>
<dbReference type="SwissPalm" id="P21554"/>
<dbReference type="BioMuta" id="CNR1"/>
<dbReference type="DMDM" id="115562"/>
<dbReference type="MassIVE" id="P21554"/>
<dbReference type="PaxDb" id="9606-ENSP00000358513"/>
<dbReference type="PeptideAtlas" id="P21554"/>
<dbReference type="ProteomicsDB" id="53875">
    <molecule id="P21554-1"/>
</dbReference>
<dbReference type="ProteomicsDB" id="53876">
    <molecule id="P21554-2"/>
</dbReference>
<dbReference type="ProteomicsDB" id="53877">
    <molecule id="P21554-3"/>
</dbReference>
<dbReference type="ABCD" id="P21554">
    <property type="antibodies" value="62 sequenced antibodies"/>
</dbReference>
<dbReference type="Antibodypedia" id="3355">
    <property type="antibodies" value="713 antibodies from 41 providers"/>
</dbReference>
<dbReference type="DNASU" id="1268"/>
<dbReference type="Ensembl" id="ENST00000369499.3">
    <molecule id="P21554-1"/>
    <property type="protein sequence ID" value="ENSP00000358511.2"/>
    <property type="gene ID" value="ENSG00000118432.13"/>
</dbReference>
<dbReference type="Ensembl" id="ENST00000369501.3">
    <molecule id="P21554-1"/>
    <property type="protein sequence ID" value="ENSP00000358513.2"/>
    <property type="gene ID" value="ENSG00000118432.13"/>
</dbReference>
<dbReference type="Ensembl" id="ENST00000428600.3">
    <molecule id="P21554-1"/>
    <property type="protein sequence ID" value="ENSP00000412192.2"/>
    <property type="gene ID" value="ENSG00000118432.13"/>
</dbReference>
<dbReference type="Ensembl" id="ENST00000468898.2">
    <molecule id="P21554-3"/>
    <property type="protein sequence ID" value="ENSP00000420188.1"/>
    <property type="gene ID" value="ENSG00000118432.13"/>
</dbReference>
<dbReference type="Ensembl" id="ENST00000549890.2">
    <molecule id="P21554-1"/>
    <property type="protein sequence ID" value="ENSP00000446819.1"/>
    <property type="gene ID" value="ENSG00000118432.13"/>
</dbReference>
<dbReference type="Ensembl" id="ENST00000551417.2">
    <molecule id="P21554-1"/>
    <property type="protein sequence ID" value="ENSP00000446702.2"/>
    <property type="gene ID" value="ENSG00000118432.13"/>
</dbReference>
<dbReference type="GeneID" id="1268"/>
<dbReference type="KEGG" id="hsa:1268"/>
<dbReference type="MANE-Select" id="ENST00000369501.3">
    <property type="protein sequence ID" value="ENSP00000358513.2"/>
    <property type="RefSeq nucleotide sequence ID" value="NM_016083.6"/>
    <property type="RefSeq protein sequence ID" value="NP_057167.2"/>
</dbReference>
<dbReference type="AGR" id="HGNC:2159"/>
<dbReference type="CTD" id="1268"/>
<dbReference type="DisGeNET" id="1268"/>
<dbReference type="GeneCards" id="CNR1"/>
<dbReference type="HGNC" id="HGNC:2159">
    <property type="gene designation" value="CNR1"/>
</dbReference>
<dbReference type="HPA" id="ENSG00000118432">
    <property type="expression patterns" value="Tissue enhanced (adipose tissue, pituitary gland)"/>
</dbReference>
<dbReference type="MIM" id="114610">
    <property type="type" value="gene"/>
</dbReference>
<dbReference type="MIM" id="601665">
    <property type="type" value="phenotype"/>
</dbReference>
<dbReference type="neXtProt" id="NX_P21554"/>
<dbReference type="OpenTargets" id="ENSG00000118432"/>
<dbReference type="PharmGKB" id="PA26681"/>
<dbReference type="VEuPathDB" id="HostDB:ENSG00000118432"/>
<dbReference type="eggNOG" id="KOG3656">
    <property type="taxonomic scope" value="Eukaryota"/>
</dbReference>
<dbReference type="GeneTree" id="ENSGT01120000271819"/>
<dbReference type="HOGENOM" id="CLU_009579_7_0_1"/>
<dbReference type="InParanoid" id="P21554"/>
<dbReference type="OMA" id="HKHANSA"/>
<dbReference type="OrthoDB" id="5966748at2759"/>
<dbReference type="PAN-GO" id="P21554">
    <property type="GO annotations" value="6 GO annotations based on evolutionary models"/>
</dbReference>
<dbReference type="PhylomeDB" id="P21554"/>
<dbReference type="TreeFam" id="TF330052"/>
<dbReference type="PathwayCommons" id="P21554"/>
<dbReference type="Reactome" id="R-HSA-373076">
    <property type="pathway name" value="Class A/1 (Rhodopsin-like receptors)"/>
</dbReference>
<dbReference type="Reactome" id="R-HSA-418594">
    <property type="pathway name" value="G alpha (i) signalling events"/>
</dbReference>
<dbReference type="SignaLink" id="P21554"/>
<dbReference type="SIGNOR" id="P21554"/>
<dbReference type="BioGRID-ORCS" id="1268">
    <property type="hits" value="19 hits in 1157 CRISPR screens"/>
</dbReference>
<dbReference type="ChiTaRS" id="CNR1">
    <property type="organism name" value="human"/>
</dbReference>
<dbReference type="EvolutionaryTrace" id="P21554"/>
<dbReference type="GeneWiki" id="Cannabinoid_receptor_type_1"/>
<dbReference type="GenomeRNAi" id="1268"/>
<dbReference type="Pharos" id="P21554">
    <property type="development level" value="Tclin"/>
</dbReference>
<dbReference type="PRO" id="PR:P21554"/>
<dbReference type="Proteomes" id="UP000005640">
    <property type="component" value="Chromosome 6"/>
</dbReference>
<dbReference type="RNAct" id="P21554">
    <property type="molecule type" value="protein"/>
</dbReference>
<dbReference type="Bgee" id="ENSG00000118432">
    <property type="expression patterns" value="Expressed in ganglionic eminence and 150 other cell types or tissues"/>
</dbReference>
<dbReference type="ExpressionAtlas" id="P21554">
    <property type="expression patterns" value="baseline and differential"/>
</dbReference>
<dbReference type="GO" id="GO:0015629">
    <property type="term" value="C:actin cytoskeleton"/>
    <property type="evidence" value="ECO:0000314"/>
    <property type="project" value="HPA"/>
</dbReference>
<dbReference type="GO" id="GO:0005737">
    <property type="term" value="C:cytoplasm"/>
    <property type="evidence" value="ECO:0000318"/>
    <property type="project" value="GO_Central"/>
</dbReference>
<dbReference type="GO" id="GO:0098982">
    <property type="term" value="C:GABA-ergic synapse"/>
    <property type="evidence" value="ECO:0007669"/>
    <property type="project" value="Ensembl"/>
</dbReference>
<dbReference type="GO" id="GO:0098978">
    <property type="term" value="C:glutamatergic synapse"/>
    <property type="evidence" value="ECO:0007669"/>
    <property type="project" value="Ensembl"/>
</dbReference>
<dbReference type="GO" id="GO:0030426">
    <property type="term" value="C:growth cone"/>
    <property type="evidence" value="ECO:0007669"/>
    <property type="project" value="Ensembl"/>
</dbReference>
<dbReference type="GO" id="GO:0045121">
    <property type="term" value="C:membrane raft"/>
    <property type="evidence" value="ECO:0007669"/>
    <property type="project" value="UniProtKB-SubCell"/>
</dbReference>
<dbReference type="GO" id="GO:0005741">
    <property type="term" value="C:mitochondrial outer membrane"/>
    <property type="evidence" value="ECO:0007669"/>
    <property type="project" value="UniProtKB-SubCell"/>
</dbReference>
<dbReference type="GO" id="GO:0005886">
    <property type="term" value="C:plasma membrane"/>
    <property type="evidence" value="ECO:0000314"/>
    <property type="project" value="HPA"/>
</dbReference>
<dbReference type="GO" id="GO:0042734">
    <property type="term" value="C:presynaptic membrane"/>
    <property type="evidence" value="ECO:0007669"/>
    <property type="project" value="Ensembl"/>
</dbReference>
<dbReference type="GO" id="GO:0004949">
    <property type="term" value="F:cannabinoid receptor activity"/>
    <property type="evidence" value="ECO:0000314"/>
    <property type="project" value="UniProtKB"/>
</dbReference>
<dbReference type="GO" id="GO:0004930">
    <property type="term" value="F:G protein-coupled receptor activity"/>
    <property type="evidence" value="ECO:0000318"/>
    <property type="project" value="GO_Central"/>
</dbReference>
<dbReference type="GO" id="GO:0042802">
    <property type="term" value="F:identical protein binding"/>
    <property type="evidence" value="ECO:0000353"/>
    <property type="project" value="IntAct"/>
</dbReference>
<dbReference type="GO" id="GO:0007189">
    <property type="term" value="P:adenylate cyclase-activating G protein-coupled receptor signaling pathway"/>
    <property type="evidence" value="ECO:0000318"/>
    <property type="project" value="GO_Central"/>
</dbReference>
<dbReference type="GO" id="GO:0007188">
    <property type="term" value="P:adenylate cyclase-modulating G protein-coupled receptor signaling pathway"/>
    <property type="evidence" value="ECO:0000314"/>
    <property type="project" value="UniProtKB"/>
</dbReference>
<dbReference type="GO" id="GO:0007413">
    <property type="term" value="P:axonal fasciculation"/>
    <property type="evidence" value="ECO:0007669"/>
    <property type="project" value="Ensembl"/>
</dbReference>
<dbReference type="GO" id="GO:0038171">
    <property type="term" value="P:cannabinoid signaling pathway"/>
    <property type="evidence" value="ECO:0000314"/>
    <property type="project" value="UniProtKB"/>
</dbReference>
<dbReference type="GO" id="GO:0007187">
    <property type="term" value="P:G protein-coupled receptor signaling pathway, coupled to cyclic nucleotide second messenger"/>
    <property type="evidence" value="ECO:0000304"/>
    <property type="project" value="ProtInc"/>
</dbReference>
<dbReference type="GO" id="GO:0042593">
    <property type="term" value="P:glucose homeostasis"/>
    <property type="evidence" value="ECO:0007669"/>
    <property type="project" value="Ensembl"/>
</dbReference>
<dbReference type="GO" id="GO:0019222">
    <property type="term" value="P:regulation of metabolic process"/>
    <property type="evidence" value="ECO:0000318"/>
    <property type="project" value="GO_Central"/>
</dbReference>
<dbReference type="GO" id="GO:0099509">
    <property type="term" value="P:regulation of presynaptic cytosolic calcium ion concentration"/>
    <property type="evidence" value="ECO:0007669"/>
    <property type="project" value="Ensembl"/>
</dbReference>
<dbReference type="GO" id="GO:0098921">
    <property type="term" value="P:retrograde trans-synaptic signaling by endocannabinoid"/>
    <property type="evidence" value="ECO:0007669"/>
    <property type="project" value="Ensembl"/>
</dbReference>
<dbReference type="CDD" id="cd15340">
    <property type="entry name" value="7tmA_CB1"/>
    <property type="match status" value="1"/>
</dbReference>
<dbReference type="FunFam" id="1.20.1070.10:FF:000072">
    <property type="entry name" value="Cannabinoid receptor 1"/>
    <property type="match status" value="1"/>
</dbReference>
<dbReference type="Gene3D" id="1.20.1070.10">
    <property type="entry name" value="Rhodopsin 7-helix transmembrane proteins"/>
    <property type="match status" value="1"/>
</dbReference>
<dbReference type="InterPro" id="IPR000810">
    <property type="entry name" value="Canbinoid_rcpt_1"/>
</dbReference>
<dbReference type="InterPro" id="IPR002230">
    <property type="entry name" value="Cnbnoid_rcpt"/>
</dbReference>
<dbReference type="InterPro" id="IPR000276">
    <property type="entry name" value="GPCR_Rhodpsn"/>
</dbReference>
<dbReference type="InterPro" id="IPR017452">
    <property type="entry name" value="GPCR_Rhodpsn_7TM"/>
</dbReference>
<dbReference type="PANTHER" id="PTHR22750">
    <property type="entry name" value="G-PROTEIN COUPLED RECEPTOR"/>
    <property type="match status" value="1"/>
</dbReference>
<dbReference type="Pfam" id="PF00001">
    <property type="entry name" value="7tm_1"/>
    <property type="match status" value="1"/>
</dbReference>
<dbReference type="PIRSF" id="PIRSF037995">
    <property type="entry name" value="Cnoid_rcpt_1"/>
    <property type="match status" value="1"/>
</dbReference>
<dbReference type="PRINTS" id="PR00522">
    <property type="entry name" value="CANABINOID1R"/>
</dbReference>
<dbReference type="PRINTS" id="PR00362">
    <property type="entry name" value="CANNABINOIDR"/>
</dbReference>
<dbReference type="PRINTS" id="PR00237">
    <property type="entry name" value="GPCRRHODOPSN"/>
</dbReference>
<dbReference type="SMART" id="SM01381">
    <property type="entry name" value="7TM_GPCR_Srsx"/>
    <property type="match status" value="1"/>
</dbReference>
<dbReference type="SUPFAM" id="SSF81321">
    <property type="entry name" value="Family A G protein-coupled receptor-like"/>
    <property type="match status" value="1"/>
</dbReference>
<dbReference type="PROSITE" id="PS00237">
    <property type="entry name" value="G_PROTEIN_RECEP_F1_1"/>
    <property type="match status" value="1"/>
</dbReference>
<dbReference type="PROSITE" id="PS50262">
    <property type="entry name" value="G_PROTEIN_RECEP_F1_2"/>
    <property type="match status" value="1"/>
</dbReference>
<organism>
    <name type="scientific">Homo sapiens</name>
    <name type="common">Human</name>
    <dbReference type="NCBI Taxonomy" id="9606"/>
    <lineage>
        <taxon>Eukaryota</taxon>
        <taxon>Metazoa</taxon>
        <taxon>Chordata</taxon>
        <taxon>Craniata</taxon>
        <taxon>Vertebrata</taxon>
        <taxon>Euteleostomi</taxon>
        <taxon>Mammalia</taxon>
        <taxon>Eutheria</taxon>
        <taxon>Euarchontoglires</taxon>
        <taxon>Primates</taxon>
        <taxon>Haplorrhini</taxon>
        <taxon>Catarrhini</taxon>
        <taxon>Hominidae</taxon>
        <taxon>Homo</taxon>
    </lineage>
</organism>
<keyword id="KW-0002">3D-structure</keyword>
<keyword id="KW-0025">Alternative splicing</keyword>
<keyword id="KW-1003">Cell membrane</keyword>
<keyword id="KW-0966">Cell projection</keyword>
<keyword id="KW-0297">G-protein coupled receptor</keyword>
<keyword id="KW-0325">Glycoprotein</keyword>
<keyword id="KW-0449">Lipoprotein</keyword>
<keyword id="KW-0472">Membrane</keyword>
<keyword id="KW-0496">Mitochondrion</keyword>
<keyword id="KW-1000">Mitochondrion outer membrane</keyword>
<keyword id="KW-0523">Neurodegeneration</keyword>
<keyword id="KW-0550">Obesity</keyword>
<keyword id="KW-0564">Palmitate</keyword>
<keyword id="KW-0597">Phosphoprotein</keyword>
<keyword id="KW-1267">Proteomics identification</keyword>
<keyword id="KW-0675">Receptor</keyword>
<keyword id="KW-1185">Reference proteome</keyword>
<keyword id="KW-0770">Synapse</keyword>
<keyword id="KW-0807">Transducer</keyword>
<keyword id="KW-0812">Transmembrane</keyword>
<keyword id="KW-1133">Transmembrane helix</keyword>
<reference key="1">
    <citation type="journal article" date="1990" name="Nucleic Acids Res.">
        <title>Nucleotide sequence of a human cannabinoid receptor cDNA.</title>
        <authorList>
            <person name="Gerard C."/>
            <person name="Mollereau C."/>
            <person name="Vassart G."/>
            <person name="Parmentier M."/>
        </authorList>
    </citation>
    <scope>NUCLEOTIDE SEQUENCE [MRNA] (ISOFORM 1)</scope>
    <source>
        <tissue>Brain stem</tissue>
    </source>
</reference>
<reference key="2">
    <citation type="journal article" date="1991" name="Biochem. J.">
        <title>Molecular cloning of a human cannabinoid receptor which is also expressed in testis.</title>
        <authorList>
            <person name="Gerard C."/>
            <person name="Mollereau C."/>
            <person name="Vassart G."/>
            <person name="Parmentier M."/>
        </authorList>
    </citation>
    <scope>NUCLEOTIDE SEQUENCE [MRNA] (ISOFORM 1)</scope>
    <scope>FUNCTION</scope>
    <source>
        <tissue>Brain stem</tissue>
    </source>
</reference>
<reference key="3">
    <citation type="journal article" date="1995" name="J. Biol. Chem.">
        <title>An amino-terminal variant of the central cannabinoid receptor resulting from alternative splicing.</title>
        <authorList>
            <person name="Shire D."/>
            <person name="Carillon C."/>
            <person name="Kaghad M."/>
            <person name="Calandra B."/>
            <person name="Rinaldi-Carmona M."/>
            <person name="Le Fur G."/>
            <person name="Caput D."/>
            <person name="Ferrara P."/>
        </authorList>
    </citation>
    <scope>NUCLEOTIDE SEQUENCE [MRNA] (ISOFORMS 1 AND 2)</scope>
    <source>
        <tissue>Lung</tissue>
    </source>
</reference>
<reference key="4">
    <citation type="journal article" date="2005" name="FEBS Lett.">
        <title>Identification and characterisation of a novel splice variant of the human CB1 receptor.</title>
        <authorList>
            <person name="Ryberg E."/>
            <person name="Vu H.K."/>
            <person name="Larsson N."/>
            <person name="Groblewski T."/>
            <person name="Hjorth S."/>
            <person name="Elebring T."/>
            <person name="Sjoegren S."/>
            <person name="Greasley P.J."/>
        </authorList>
    </citation>
    <scope>NUCLEOTIDE SEQUENCE [MRNA] (ISOFORM 3)</scope>
    <scope>FUNCTION (ISOFORMS 1; 2 AND 3)</scope>
    <scope>TISSUE SPECIFICITY</scope>
    <source>
        <tissue>Fetal brain</tissue>
    </source>
</reference>
<reference key="5">
    <citation type="submission" date="1998-11" db="EMBL/GenBank/DDBJ databases">
        <authorList>
            <person name="Kathmann M."/>
            <person name="Schlicker E."/>
        </authorList>
    </citation>
    <scope>NUCLEOTIDE SEQUENCE [MRNA] (ISOFORM 1)</scope>
    <source>
        <tissue>Hippocampus</tissue>
    </source>
</reference>
<reference key="6">
    <citation type="submission" date="1996-11" db="EMBL/GenBank/DDBJ databases">
        <authorList>
            <person name="Bonner T.I."/>
        </authorList>
    </citation>
    <scope>NUCLEOTIDE SEQUENCE [GENOMIC DNA]</scope>
</reference>
<reference key="7">
    <citation type="submission" date="2005-05" db="EMBL/GenBank/DDBJ databases">
        <authorList>
            <person name="Kumar S."/>
            <person name="Gupta S."/>
            <person name="Sharma G."/>
        </authorList>
    </citation>
    <scope>NUCLEOTIDE SEQUENCE [MRNA] (ISOFORM 1)</scope>
    <source>
        <tissue>Brain tumor</tissue>
    </source>
</reference>
<reference key="8">
    <citation type="submission" date="2003-01" db="EMBL/GenBank/DDBJ databases">
        <title>cDNA clones of human proteins involved in signal transduction sequenced by the Guthrie cDNA resource center (www.cdna.org).</title>
        <authorList>
            <person name="Kopatz S.A."/>
            <person name="Aronstam R.S."/>
            <person name="Sharma S.V."/>
        </authorList>
    </citation>
    <scope>NUCLEOTIDE SEQUENCE [LARGE SCALE MRNA] (ISOFORM 1)</scope>
</reference>
<reference key="9">
    <citation type="journal article" date="2004" name="Nat. Genet.">
        <title>Complete sequencing and characterization of 21,243 full-length human cDNAs.</title>
        <authorList>
            <person name="Ota T."/>
            <person name="Suzuki Y."/>
            <person name="Nishikawa T."/>
            <person name="Otsuki T."/>
            <person name="Sugiyama T."/>
            <person name="Irie R."/>
            <person name="Wakamatsu A."/>
            <person name="Hayashi K."/>
            <person name="Sato H."/>
            <person name="Nagai K."/>
            <person name="Kimura K."/>
            <person name="Makita H."/>
            <person name="Sekine M."/>
            <person name="Obayashi M."/>
            <person name="Nishi T."/>
            <person name="Shibahara T."/>
            <person name="Tanaka T."/>
            <person name="Ishii S."/>
            <person name="Yamamoto J."/>
            <person name="Saito K."/>
            <person name="Kawai Y."/>
            <person name="Isono Y."/>
            <person name="Nakamura Y."/>
            <person name="Nagahari K."/>
            <person name="Murakami K."/>
            <person name="Yasuda T."/>
            <person name="Iwayanagi T."/>
            <person name="Wagatsuma M."/>
            <person name="Shiratori A."/>
            <person name="Sudo H."/>
            <person name="Hosoiri T."/>
            <person name="Kaku Y."/>
            <person name="Kodaira H."/>
            <person name="Kondo H."/>
            <person name="Sugawara M."/>
            <person name="Takahashi M."/>
            <person name="Kanda K."/>
            <person name="Yokoi T."/>
            <person name="Furuya T."/>
            <person name="Kikkawa E."/>
            <person name="Omura Y."/>
            <person name="Abe K."/>
            <person name="Kamihara K."/>
            <person name="Katsuta N."/>
            <person name="Sato K."/>
            <person name="Tanikawa M."/>
            <person name="Yamazaki M."/>
            <person name="Ninomiya K."/>
            <person name="Ishibashi T."/>
            <person name="Yamashita H."/>
            <person name="Murakawa K."/>
            <person name="Fujimori K."/>
            <person name="Tanai H."/>
            <person name="Kimata M."/>
            <person name="Watanabe M."/>
            <person name="Hiraoka S."/>
            <person name="Chiba Y."/>
            <person name="Ishida S."/>
            <person name="Ono Y."/>
            <person name="Takiguchi S."/>
            <person name="Watanabe S."/>
            <person name="Yosida M."/>
            <person name="Hotuta T."/>
            <person name="Kusano J."/>
            <person name="Kanehori K."/>
            <person name="Takahashi-Fujii A."/>
            <person name="Hara H."/>
            <person name="Tanase T.-O."/>
            <person name="Nomura Y."/>
            <person name="Togiya S."/>
            <person name="Komai F."/>
            <person name="Hara R."/>
            <person name="Takeuchi K."/>
            <person name="Arita M."/>
            <person name="Imose N."/>
            <person name="Musashino K."/>
            <person name="Yuuki H."/>
            <person name="Oshima A."/>
            <person name="Sasaki N."/>
            <person name="Aotsuka S."/>
            <person name="Yoshikawa Y."/>
            <person name="Matsunawa H."/>
            <person name="Ichihara T."/>
            <person name="Shiohata N."/>
            <person name="Sano S."/>
            <person name="Moriya S."/>
            <person name="Momiyama H."/>
            <person name="Satoh N."/>
            <person name="Takami S."/>
            <person name="Terashima Y."/>
            <person name="Suzuki O."/>
            <person name="Nakagawa S."/>
            <person name="Senoh A."/>
            <person name="Mizoguchi H."/>
            <person name="Goto Y."/>
            <person name="Shimizu F."/>
            <person name="Wakebe H."/>
            <person name="Hishigaki H."/>
            <person name="Watanabe T."/>
            <person name="Sugiyama A."/>
            <person name="Takemoto M."/>
            <person name="Kawakami B."/>
            <person name="Yamazaki M."/>
            <person name="Watanabe K."/>
            <person name="Kumagai A."/>
            <person name="Itakura S."/>
            <person name="Fukuzumi Y."/>
            <person name="Fujimori Y."/>
            <person name="Komiyama M."/>
            <person name="Tashiro H."/>
            <person name="Tanigami A."/>
            <person name="Fujiwara T."/>
            <person name="Ono T."/>
            <person name="Yamada K."/>
            <person name="Fujii Y."/>
            <person name="Ozaki K."/>
            <person name="Hirao M."/>
            <person name="Ohmori Y."/>
            <person name="Kawabata A."/>
            <person name="Hikiji T."/>
            <person name="Kobatake N."/>
            <person name="Inagaki H."/>
            <person name="Ikema Y."/>
            <person name="Okamoto S."/>
            <person name="Okitani R."/>
            <person name="Kawakami T."/>
            <person name="Noguchi S."/>
            <person name="Itoh T."/>
            <person name="Shigeta K."/>
            <person name="Senba T."/>
            <person name="Matsumura K."/>
            <person name="Nakajima Y."/>
            <person name="Mizuno T."/>
            <person name="Morinaga M."/>
            <person name="Sasaki M."/>
            <person name="Togashi T."/>
            <person name="Oyama M."/>
            <person name="Hata H."/>
            <person name="Watanabe M."/>
            <person name="Komatsu T."/>
            <person name="Mizushima-Sugano J."/>
            <person name="Satoh T."/>
            <person name="Shirai Y."/>
            <person name="Takahashi Y."/>
            <person name="Nakagawa K."/>
            <person name="Okumura K."/>
            <person name="Nagase T."/>
            <person name="Nomura N."/>
            <person name="Kikuchi H."/>
            <person name="Masuho Y."/>
            <person name="Yamashita R."/>
            <person name="Nakai K."/>
            <person name="Yada T."/>
            <person name="Nakamura Y."/>
            <person name="Ohara O."/>
            <person name="Isogai T."/>
            <person name="Sugano S."/>
        </authorList>
    </citation>
    <scope>NUCLEOTIDE SEQUENCE [LARGE SCALE MRNA] (ISOFORM 1)</scope>
    <source>
        <tissue>Hippocampus</tissue>
    </source>
</reference>
<reference key="10">
    <citation type="journal article" date="2003" name="Nature">
        <title>The DNA sequence and analysis of human chromosome 6.</title>
        <authorList>
            <person name="Mungall A.J."/>
            <person name="Palmer S.A."/>
            <person name="Sims S.K."/>
            <person name="Edwards C.A."/>
            <person name="Ashurst J.L."/>
            <person name="Wilming L."/>
            <person name="Jones M.C."/>
            <person name="Horton R."/>
            <person name="Hunt S.E."/>
            <person name="Scott C.E."/>
            <person name="Gilbert J.G.R."/>
            <person name="Clamp M.E."/>
            <person name="Bethel G."/>
            <person name="Milne S."/>
            <person name="Ainscough R."/>
            <person name="Almeida J.P."/>
            <person name="Ambrose K.D."/>
            <person name="Andrews T.D."/>
            <person name="Ashwell R.I.S."/>
            <person name="Babbage A.K."/>
            <person name="Bagguley C.L."/>
            <person name="Bailey J."/>
            <person name="Banerjee R."/>
            <person name="Barker D.J."/>
            <person name="Barlow K.F."/>
            <person name="Bates K."/>
            <person name="Beare D.M."/>
            <person name="Beasley H."/>
            <person name="Beasley O."/>
            <person name="Bird C.P."/>
            <person name="Blakey S.E."/>
            <person name="Bray-Allen S."/>
            <person name="Brook J."/>
            <person name="Brown A.J."/>
            <person name="Brown J.Y."/>
            <person name="Burford D.C."/>
            <person name="Burrill W."/>
            <person name="Burton J."/>
            <person name="Carder C."/>
            <person name="Carter N.P."/>
            <person name="Chapman J.C."/>
            <person name="Clark S.Y."/>
            <person name="Clark G."/>
            <person name="Clee C.M."/>
            <person name="Clegg S."/>
            <person name="Cobley V."/>
            <person name="Collier R.E."/>
            <person name="Collins J.E."/>
            <person name="Colman L.K."/>
            <person name="Corby N.R."/>
            <person name="Coville G.J."/>
            <person name="Culley K.M."/>
            <person name="Dhami P."/>
            <person name="Davies J."/>
            <person name="Dunn M."/>
            <person name="Earthrowl M.E."/>
            <person name="Ellington A.E."/>
            <person name="Evans K.A."/>
            <person name="Faulkner L."/>
            <person name="Francis M.D."/>
            <person name="Frankish A."/>
            <person name="Frankland J."/>
            <person name="French L."/>
            <person name="Garner P."/>
            <person name="Garnett J."/>
            <person name="Ghori M.J."/>
            <person name="Gilby L.M."/>
            <person name="Gillson C.J."/>
            <person name="Glithero R.J."/>
            <person name="Grafham D.V."/>
            <person name="Grant M."/>
            <person name="Gribble S."/>
            <person name="Griffiths C."/>
            <person name="Griffiths M.N.D."/>
            <person name="Hall R."/>
            <person name="Halls K.S."/>
            <person name="Hammond S."/>
            <person name="Harley J.L."/>
            <person name="Hart E.A."/>
            <person name="Heath P.D."/>
            <person name="Heathcott R."/>
            <person name="Holmes S.J."/>
            <person name="Howden P.J."/>
            <person name="Howe K.L."/>
            <person name="Howell G.R."/>
            <person name="Huckle E."/>
            <person name="Humphray S.J."/>
            <person name="Humphries M.D."/>
            <person name="Hunt A.R."/>
            <person name="Johnson C.M."/>
            <person name="Joy A.A."/>
            <person name="Kay M."/>
            <person name="Keenan S.J."/>
            <person name="Kimberley A.M."/>
            <person name="King A."/>
            <person name="Laird G.K."/>
            <person name="Langford C."/>
            <person name="Lawlor S."/>
            <person name="Leongamornlert D.A."/>
            <person name="Leversha M."/>
            <person name="Lloyd C.R."/>
            <person name="Lloyd D.M."/>
            <person name="Loveland J.E."/>
            <person name="Lovell J."/>
            <person name="Martin S."/>
            <person name="Mashreghi-Mohammadi M."/>
            <person name="Maslen G.L."/>
            <person name="Matthews L."/>
            <person name="McCann O.T."/>
            <person name="McLaren S.J."/>
            <person name="McLay K."/>
            <person name="McMurray A."/>
            <person name="Moore M.J.F."/>
            <person name="Mullikin J.C."/>
            <person name="Niblett D."/>
            <person name="Nickerson T."/>
            <person name="Novik K.L."/>
            <person name="Oliver K."/>
            <person name="Overton-Larty E.K."/>
            <person name="Parker A."/>
            <person name="Patel R."/>
            <person name="Pearce A.V."/>
            <person name="Peck A.I."/>
            <person name="Phillimore B.J.C.T."/>
            <person name="Phillips S."/>
            <person name="Plumb R.W."/>
            <person name="Porter K.M."/>
            <person name="Ramsey Y."/>
            <person name="Ranby S.A."/>
            <person name="Rice C.M."/>
            <person name="Ross M.T."/>
            <person name="Searle S.M."/>
            <person name="Sehra H.K."/>
            <person name="Sheridan E."/>
            <person name="Skuce C.D."/>
            <person name="Smith S."/>
            <person name="Smith M."/>
            <person name="Spraggon L."/>
            <person name="Squares S.L."/>
            <person name="Steward C.A."/>
            <person name="Sycamore N."/>
            <person name="Tamlyn-Hall G."/>
            <person name="Tester J."/>
            <person name="Theaker A.J."/>
            <person name="Thomas D.W."/>
            <person name="Thorpe A."/>
            <person name="Tracey A."/>
            <person name="Tromans A."/>
            <person name="Tubby B."/>
            <person name="Wall M."/>
            <person name="Wallis J.M."/>
            <person name="West A.P."/>
            <person name="White S.S."/>
            <person name="Whitehead S.L."/>
            <person name="Whittaker H."/>
            <person name="Wild A."/>
            <person name="Willey D.J."/>
            <person name="Wilmer T.E."/>
            <person name="Wood J.M."/>
            <person name="Wray P.W."/>
            <person name="Wyatt J.C."/>
            <person name="Young L."/>
            <person name="Younger R.M."/>
            <person name="Bentley D.R."/>
            <person name="Coulson A."/>
            <person name="Durbin R.M."/>
            <person name="Hubbard T."/>
            <person name="Sulston J.E."/>
            <person name="Dunham I."/>
            <person name="Rogers J."/>
            <person name="Beck S."/>
        </authorList>
    </citation>
    <scope>NUCLEOTIDE SEQUENCE [LARGE SCALE GENOMIC DNA]</scope>
</reference>
<reference key="11">
    <citation type="submission" date="2005-09" db="EMBL/GenBank/DDBJ databases">
        <authorList>
            <person name="Mural R.J."/>
            <person name="Istrail S."/>
            <person name="Sutton G.G."/>
            <person name="Florea L."/>
            <person name="Halpern A.L."/>
            <person name="Mobarry C.M."/>
            <person name="Lippert R."/>
            <person name="Walenz B."/>
            <person name="Shatkay H."/>
            <person name="Dew I."/>
            <person name="Miller J.R."/>
            <person name="Flanigan M.J."/>
            <person name="Edwards N.J."/>
            <person name="Bolanos R."/>
            <person name="Fasulo D."/>
            <person name="Halldorsson B.V."/>
            <person name="Hannenhalli S."/>
            <person name="Turner R."/>
            <person name="Yooseph S."/>
            <person name="Lu F."/>
            <person name="Nusskern D.R."/>
            <person name="Shue B.C."/>
            <person name="Zheng X.H."/>
            <person name="Zhong F."/>
            <person name="Delcher A.L."/>
            <person name="Huson D.H."/>
            <person name="Kravitz S.A."/>
            <person name="Mouchard L."/>
            <person name="Reinert K."/>
            <person name="Remington K.A."/>
            <person name="Clark A.G."/>
            <person name="Waterman M.S."/>
            <person name="Eichler E.E."/>
            <person name="Adams M.D."/>
            <person name="Hunkapiller M.W."/>
            <person name="Myers E.W."/>
            <person name="Venter J.C."/>
        </authorList>
    </citation>
    <scope>NUCLEOTIDE SEQUENCE [LARGE SCALE GENOMIC DNA]</scope>
</reference>
<reference key="12">
    <citation type="journal article" date="2004" name="Genome Res.">
        <title>The status, quality, and expansion of the NIH full-length cDNA project: the Mammalian Gene Collection (MGC).</title>
        <authorList>
            <consortium name="The MGC Project Team"/>
        </authorList>
    </citation>
    <scope>NUCLEOTIDE SEQUENCE [LARGE SCALE MRNA] (ISOFORM 1)</scope>
    <source>
        <tissue>Lung</tissue>
    </source>
</reference>
<reference key="13">
    <citation type="journal article" date="2020" name="EPMA J.">
        <title>Targeting the endocannabinoid system: a predictive, preventive, and personalized medicine-directed approach to the management of brain pathologies.</title>
        <authorList>
            <person name="Reddy V."/>
            <person name="Grogan D."/>
            <person name="Ahluwalia M."/>
            <person name="Salles E.L."/>
            <person name="Ahluwalia P."/>
            <person name="Khodadadi H."/>
            <person name="Alverson K."/>
            <person name="Nguyen A."/>
            <person name="Raju S.P."/>
            <person name="Gaur P."/>
            <person name="Braun M."/>
            <person name="Vale F.L."/>
            <person name="Costigliola V."/>
            <person name="Dhandapani K."/>
            <person name="Baban B."/>
            <person name="Vaibhav K."/>
        </authorList>
    </citation>
    <scope>REVIEW ON INVOLVEMENT IN NERVOUS SYSTEM DISORDERS</scope>
</reference>
<reference key="14">
    <citation type="journal article" date="1993" name="Neuroscience">
        <title>Loss of cannabinoid receptors in the substantia nigra in Huntington's disease.</title>
        <authorList>
            <person name="Glass M."/>
            <person name="Faull R.L."/>
            <person name="Dragunow M."/>
        </authorList>
    </citation>
    <scope>INVOLVEMENT IN HUNTINGTON DISEASE</scope>
</reference>
<reference key="15">
    <citation type="journal article" date="2000" name="Neuroscience">
        <title>The pattern of neurodegeneration in Huntington's disease: a comparative study of cannabinoid, dopamine, adenosine and GABA(A) receptor alterations in the human basal ganglia in Huntington's disease.</title>
        <authorList>
            <person name="Glass M."/>
            <person name="Dragunow M."/>
            <person name="Faull R.L."/>
        </authorList>
    </citation>
    <scope>INVOLVEMENT IN HUNTINGTON DISEASE</scope>
</reference>
<reference key="16">
    <citation type="journal article" date="2007" name="Mol. Pharmacol.">
        <title>CB1 cannabinoid receptor activity is modulated by the cannabinoid receptor interacting protein CRIP 1a.</title>
        <authorList>
            <person name="Niehaus J.L."/>
            <person name="Liu Y."/>
            <person name="Wallis K.T."/>
            <person name="Egertova M."/>
            <person name="Bhartur S.G."/>
            <person name="Mukhopadhyay S."/>
            <person name="Shi S."/>
            <person name="He H."/>
            <person name="Selley D.E."/>
            <person name="Howlett A.C."/>
            <person name="Elphick M.R."/>
            <person name="Lewis D.L."/>
        </authorList>
    </citation>
    <scope>FUNCTION</scope>
    <scope>INTERACTION WITH CNRIP1</scope>
    <source>
        <tissue>Brain</tissue>
    </source>
</reference>
<reference key="17">
    <citation type="journal article" date="2007" name="Proc. Natl. Acad. Sci. U.S.A.">
        <title>Hemopressin is an inverse agonist of CB1 cannabinoid receptors.</title>
        <authorList>
            <person name="Heimann A.S."/>
            <person name="Gomes I."/>
            <person name="Dale C.S."/>
            <person name="Pagano R.L."/>
            <person name="Gupta A."/>
            <person name="de Souza L.L."/>
            <person name="Luchessi A.D."/>
            <person name="Castro L.M."/>
            <person name="Giorgi R."/>
            <person name="Rioli V."/>
            <person name="Ferro E.S."/>
            <person name="Devi L.A."/>
        </authorList>
    </citation>
    <scope>ACTIVITY REGULATION</scope>
</reference>
<reference key="18">
    <citation type="journal article" date="2012" name="Br. J. Pharmacol.">
        <title>Effects of palmitoylation of Cys(415) in helix 8 of the CB(1) cannabinoid receptor on membrane localization and signalling.</title>
        <authorList>
            <person name="Oddi S."/>
            <person name="Dainese E."/>
            <person name="Sandiford S."/>
            <person name="Fezza F."/>
            <person name="Lanuti M."/>
            <person name="Chiurchiu V."/>
            <person name="Totaro A."/>
            <person name="Catanzaro G."/>
            <person name="Barcaroli D."/>
            <person name="De Laurenzi V."/>
            <person name="Centonze D."/>
            <person name="Mukhopadhyay S."/>
            <person name="Selent J."/>
            <person name="Howlett A.C."/>
            <person name="Maccarrone M."/>
        </authorList>
    </citation>
    <scope>FUNCTION</scope>
    <scope>SUBCELLULAR LOCATION</scope>
    <scope>PALMITOYLATION AT CYS-415</scope>
    <scope>MUTAGENESIS OF CYS-415</scope>
</reference>
<reference key="19">
    <citation type="journal article" date="2008" name="Cell Metab.">
        <title>The acyclic CB1R inverse agonist taranabant mediates weight loss by increasing energy expenditure and decreasing caloric intake.</title>
        <authorList>
            <person name="Addy C."/>
            <person name="Wright H."/>
            <person name="Van Laere K."/>
            <person name="Gantz I."/>
            <person name="Erondu N."/>
            <person name="Musser B.J."/>
            <person name="Lu K."/>
            <person name="Yuan J."/>
            <person name="Sanabria-Bohorquez S.M."/>
            <person name="Stoch A."/>
            <person name="Stevens C."/>
            <person name="Fong T.M."/>
            <person name="De Lepeleire I."/>
            <person name="Cilissen C."/>
            <person name="Cote J."/>
            <person name="Rosko K."/>
            <person name="Gendrano I.N. III"/>
            <person name="Nguyen A.M."/>
            <person name="Gumbiner B."/>
            <person name="Rothenberg P."/>
            <person name="de Hoon J."/>
            <person name="Bormans G."/>
            <person name="Depre M."/>
            <person name="Eng W.S."/>
            <person name="Ravussin E."/>
            <person name="Klein S."/>
            <person name="Blundell J."/>
            <person name="Herman G.A."/>
            <person name="Burns H.D."/>
            <person name="Hargreaves R.J."/>
            <person name="Wagner J."/>
            <person name="Gottesdiener K."/>
            <person name="Amatruda J.M."/>
            <person name="Heymsfield S.B."/>
        </authorList>
    </citation>
    <scope>INVOLVEMENT IN OBESITY</scope>
</reference>
<reference key="20">
    <citation type="journal article" date="2009" name="Neuroscience">
        <title>Altered CB1 receptor and endocannabinoid levels precede motor symptom onset in a transgenic mouse model of Huntington's disease.</title>
        <authorList>
            <person name="Dowie M.J."/>
            <person name="Bradshaw H.B."/>
            <person name="Howard M.L."/>
            <person name="Nicholson L.F."/>
            <person name="Faull R.L."/>
            <person name="Hannan A.J."/>
            <person name="Glass M."/>
        </authorList>
    </citation>
    <scope>INVOLVEMENT IN HUNTINGTON DISEASE</scope>
</reference>
<reference key="21">
    <citation type="journal article" date="2013" name="Nat. Med.">
        <title>Activation of the Nlrp3 inflammasome in infiltrating macrophages by endocannabinoids mediates beta cell loss in type 2 diabetes.</title>
        <authorList>
            <person name="Jourdan T."/>
            <person name="Godlewski G."/>
            <person name="Cinar R."/>
            <person name="Bertola A."/>
            <person name="Szanda G."/>
            <person name="Liu J."/>
            <person name="Tam J."/>
            <person name="Han T."/>
            <person name="Mukhopadhyay B."/>
            <person name="Skarulis M.C."/>
            <person name="Ju C."/>
            <person name="Aouadi M."/>
            <person name="Czech M.P."/>
            <person name="Kunos G."/>
        </authorList>
    </citation>
    <scope>FUNCTION</scope>
    <scope>INDUCTION BY ENDOCANNABINOID ANANDAMIDE</scope>
</reference>
<reference key="22">
    <citation type="journal article" date="2018" name="Biochem. Pharmacol.">
        <title>Genetic deletion of CB1 cannabinoid receptors exacerbates the Alzheimer-like symptoms in a transgenic animal model.</title>
        <authorList>
            <person name="Aso E."/>
            <person name="Andres-Benito P."/>
            <person name="Ferrer I."/>
        </authorList>
    </citation>
    <scope>INVOLVEMENT IN ALZHEIMER DISEASE</scope>
</reference>
<reference key="23">
    <citation type="journal article" date="2019" name="Eur. J. Nucl. Med. Mol. Imaging">
        <title>Regional changes in the type 1 cannabinoid receptor are associated with cognitive dysfunction in Parkinson's disease.</title>
        <authorList>
            <person name="Ceccarini J."/>
            <person name="Casteels C."/>
            <person name="Ahmad R."/>
            <person name="Crabbe M."/>
            <person name="Van de Vliet L."/>
            <person name="Vanhaute H."/>
            <person name="Vandenbulcke M."/>
            <person name="Vandenberghe W."/>
            <person name="Van Laere K."/>
        </authorList>
    </citation>
    <scope>INVOLVEMENT IN PARKINSON DISEASE</scope>
</reference>
<reference key="24">
    <citation type="journal article" date="2002" name="Protein Sci.">
        <title>Cannabinoid receptor-G protein interactions: G(alphai1)-bound structures of IC3 and a mutant with altered G protein specificity.</title>
        <authorList>
            <person name="Ulfers A.L."/>
            <person name="McMurry J.L."/>
            <person name="Miller A."/>
            <person name="Wang L."/>
            <person name="Kendall D.A."/>
            <person name="Mierke D.F."/>
        </authorList>
    </citation>
    <scope>STRUCTURE BY NMR OF 338-346</scope>
    <scope>INTERACTION WITH GNAI1</scope>
    <scope>MUTAGENESIS OF 341-LEU-ALA-342</scope>
</reference>
<reference evidence="26" key="25">
    <citation type="journal article" date="2016" name="Cell">
        <title>Crystal structure of the human cannabinoid receptor CB1.</title>
        <authorList>
            <person name="Hua T."/>
            <person name="Vemuri K."/>
            <person name="Pu M."/>
            <person name="Qu L."/>
            <person name="Han G.W."/>
            <person name="Wu Y."/>
            <person name="Zhao S."/>
            <person name="Shui W."/>
            <person name="Li S."/>
            <person name="Korde A."/>
            <person name="Laprairie R.B."/>
            <person name="Stahl E.L."/>
            <person name="Ho J.H."/>
            <person name="Zvonok N."/>
            <person name="Zhou H."/>
            <person name="Kufareva I."/>
            <person name="Wu B."/>
            <person name="Zhao Q."/>
            <person name="Hanson M.A."/>
            <person name="Bohn L.M."/>
            <person name="Makriyannis A."/>
            <person name="Stevens R.C."/>
            <person name="Liu Z.J."/>
        </authorList>
    </citation>
    <scope>X-RAY CRYSTALLOGRAPHY (2.80 ANGSTROMS) OF 99-306 AND 332-414</scope>
    <scope>FUNCTION</scope>
    <scope>TOPOLOGY</scope>
</reference>
<reference evidence="27" key="26">
    <citation type="journal article" date="2016" name="Nature">
        <title>High-resolution crystal structure of the human CB1 cannabinoid receptor.</title>
        <authorList>
            <person name="Shao Z."/>
            <person name="Yin J."/>
            <person name="Chapman K."/>
            <person name="Grzemska M."/>
            <person name="Clark L."/>
            <person name="Wang J."/>
            <person name="Rosenbaum D.M."/>
        </authorList>
    </citation>
    <scope>X-RAY CRYSTALLOGRAPHY (2.60 ANGSTROMS) OF 90-301 AND 334-421 IN COMPLEX WITH INVERSE AGONIST TARANABANT</scope>
    <scope>MUTAGENESIS OF THR-210</scope>
    <scope>TOPOLOGY</scope>
    <scope>FUNCTION</scope>
</reference>
<feature type="chain" id="PRO_0000069314" description="Cannabinoid receptor 1">
    <location>
        <begin position="1"/>
        <end position="472"/>
    </location>
</feature>
<feature type="topological domain" description="Extracellular" evidence="16 17">
    <location>
        <begin position="1"/>
        <end position="116"/>
    </location>
</feature>
<feature type="transmembrane region" description="Helical; Name=1" evidence="16 17">
    <location>
        <begin position="117"/>
        <end position="142"/>
    </location>
</feature>
<feature type="topological domain" description="Cytoplasmic" evidence="16 17">
    <location>
        <begin position="143"/>
        <end position="154"/>
    </location>
</feature>
<feature type="transmembrane region" description="Helical; Name=2" evidence="16 17">
    <location>
        <begin position="155"/>
        <end position="175"/>
    </location>
</feature>
<feature type="topological domain" description="Extracellular" evidence="16 17">
    <location>
        <begin position="176"/>
        <end position="187"/>
    </location>
</feature>
<feature type="transmembrane region" description="Helical; Name=3" evidence="16 17">
    <location>
        <begin position="188"/>
        <end position="212"/>
    </location>
</feature>
<feature type="topological domain" description="Cytoplasmic" evidence="16 17">
    <location>
        <begin position="213"/>
        <end position="232"/>
    </location>
</feature>
<feature type="transmembrane region" description="Helical; Name=4" evidence="16 17">
    <location>
        <begin position="233"/>
        <end position="255"/>
    </location>
</feature>
<feature type="topological domain" description="Extracellular" evidence="16 17">
    <location>
        <begin position="256"/>
        <end position="273"/>
    </location>
</feature>
<feature type="transmembrane region" description="Helical; Name=5" evidence="16 17">
    <location>
        <begin position="274"/>
        <end position="299"/>
    </location>
</feature>
<feature type="topological domain" description="Cytoplasmic" evidence="16 17">
    <location>
        <begin position="300"/>
        <end position="344"/>
    </location>
</feature>
<feature type="transmembrane region" description="Helical; Name=6" evidence="16 17">
    <location>
        <begin position="345"/>
        <end position="365"/>
    </location>
</feature>
<feature type="topological domain" description="Extracellular" evidence="16 17">
    <location>
        <begin position="366"/>
        <end position="377"/>
    </location>
</feature>
<feature type="transmembrane region" description="Helical; Name=7" evidence="16 17">
    <location>
        <begin position="378"/>
        <end position="399"/>
    </location>
</feature>
<feature type="topological domain" description="Cytoplasmic" evidence="16 17">
    <location>
        <begin position="400"/>
        <end position="472"/>
    </location>
</feature>
<feature type="region of interest" description="Required for mitochondrial localization" evidence="3">
    <location>
        <begin position="2"/>
        <end position="23"/>
    </location>
</feature>
<feature type="modified residue" description="Phosphoserine" evidence="3">
    <location>
        <position position="425"/>
    </location>
</feature>
<feature type="modified residue" description="Phosphoserine" evidence="3">
    <location>
        <position position="429"/>
    </location>
</feature>
<feature type="lipid moiety-binding region" description="S-palmitoyl cysteine" evidence="14">
    <location>
        <position position="415"/>
    </location>
</feature>
<feature type="glycosylation site" description="N-linked (GlcNAc...) asparagine" evidence="4">
    <location>
        <position position="77"/>
    </location>
</feature>
<feature type="glycosylation site" description="N-linked (GlcNAc...) asparagine" evidence="4">
    <location>
        <position position="83"/>
    </location>
</feature>
<feature type="splice variant" id="VSP_001868" description="In isoform 2." evidence="23">
    <original>MKSILDGLADTTFRTITTDLLYVGSNDIQYEDIKGDMASKLGYFPQKFPLTSFRGSPFQEKMTAGDNPQLVPADQVNITEFYNKSLSSF</original>
    <variation>MALQIPPSAPSPLTSCTWAQMTFSTKTS</variation>
    <location>
        <begin position="1"/>
        <end position="89"/>
    </location>
</feature>
<feature type="splice variant" id="VSP_016529" description="In isoform 3." evidence="22">
    <location>
        <begin position="22"/>
        <end position="54"/>
    </location>
</feature>
<feature type="mutagenesis site" description="7-fold lower affinity for a synthetic agonist, CP55940, possibly due the stabilization of an inactive conformation." evidence="17">
    <original>T</original>
    <variation>A</variation>
    <location>
        <position position="210"/>
    </location>
</feature>
<feature type="mutagenesis site" description="Loss of activity, when assayed for GNAI1 GTPase stimulatory activity." evidence="7">
    <original>LA</original>
    <variation>AL</variation>
    <location>
        <begin position="341"/>
        <end position="342"/>
    </location>
</feature>
<feature type="mutagenesis site" description="Loss of palmitoylation, marked loss of association with lipid rafts on the plasma membrane and loss of activity, when assayed for downstream GTP-binding and reduction in cAMP levels." evidence="14">
    <original>C</original>
    <variation>A</variation>
    <location>
        <position position="415"/>
    </location>
</feature>
<feature type="sequence conflict" description="In Ref. 12; AAH95513." evidence="24" ref="12">
    <original>E</original>
    <variation>G</variation>
    <location>
        <position position="94"/>
    </location>
</feature>
<feature type="sequence conflict" description="In Ref. 12; AAH95513." evidence="24" ref="12">
    <original>M</original>
    <variation>I</variation>
    <location>
        <position position="103"/>
    </location>
</feature>
<feature type="sequence conflict" description="In Ref. 12; AAH95513." evidence="24" ref="12">
    <original>C</original>
    <variation>R</variation>
    <location>
        <position position="149"/>
    </location>
</feature>
<feature type="sequence conflict" description="In Ref. 5; AAD34320." evidence="24" ref="5">
    <original>F</original>
    <variation>L</variation>
    <location>
        <position position="200"/>
    </location>
</feature>
<feature type="sequence conflict" description="In Ref. 5; AAD34320." evidence="24" ref="5">
    <original>I</original>
    <variation>V</variation>
    <location>
        <position position="216"/>
    </location>
</feature>
<feature type="sequence conflict" description="In Ref. 5; AAD34320." evidence="24" ref="5">
    <original>V</original>
    <variation>A</variation>
    <location>
        <position position="246"/>
    </location>
</feature>
<feature type="sequence conflict" description="In Ref. 12; AAH95513." evidence="24" ref="12">
    <original>L</original>
    <variation>P</variation>
    <location>
        <position position="298"/>
    </location>
</feature>
<feature type="sequence conflict" description="In Ref. 12; AAI00972." evidence="24" ref="12">
    <original>P</original>
    <variation>S</variation>
    <location>
        <position position="332"/>
    </location>
</feature>
<feature type="strand" evidence="31">
    <location>
        <begin position="100"/>
        <end position="102"/>
    </location>
</feature>
<feature type="helix" evidence="29">
    <location>
        <begin position="105"/>
        <end position="107"/>
    </location>
</feature>
<feature type="helix" evidence="29">
    <location>
        <begin position="113"/>
        <end position="143"/>
    </location>
</feature>
<feature type="helix" evidence="29">
    <location>
        <begin position="145"/>
        <end position="148"/>
    </location>
</feature>
<feature type="helix" evidence="29">
    <location>
        <begin position="151"/>
        <end position="153"/>
    </location>
</feature>
<feature type="helix" evidence="29">
    <location>
        <begin position="154"/>
        <end position="178"/>
    </location>
</feature>
<feature type="helix" evidence="29">
    <location>
        <begin position="186"/>
        <end position="219"/>
    </location>
</feature>
<feature type="turn" evidence="29">
    <location>
        <begin position="221"/>
        <end position="223"/>
    </location>
</feature>
<feature type="helix" evidence="29">
    <location>
        <begin position="224"/>
        <end position="227"/>
    </location>
</feature>
<feature type="helix" evidence="29">
    <location>
        <begin position="230"/>
        <end position="249"/>
    </location>
</feature>
<feature type="helix" evidence="29">
    <location>
        <begin position="250"/>
        <end position="253"/>
    </location>
</feature>
<feature type="helix" evidence="29">
    <location>
        <begin position="257"/>
        <end position="260"/>
    </location>
</feature>
<feature type="strand" evidence="29">
    <location>
        <begin position="266"/>
        <end position="268"/>
    </location>
</feature>
<feature type="helix" evidence="29">
    <location>
        <begin position="273"/>
        <end position="300"/>
    </location>
</feature>
<feature type="helix" evidence="30">
    <location>
        <begin position="302"/>
        <end position="305"/>
    </location>
</feature>
<feature type="helix" evidence="32">
    <location>
        <begin position="306"/>
        <end position="309"/>
    </location>
</feature>
<feature type="helix" evidence="29">
    <location>
        <begin position="334"/>
        <end position="367"/>
    </location>
</feature>
<feature type="helix" evidence="29">
    <location>
        <begin position="375"/>
        <end position="400"/>
    </location>
</feature>
<feature type="helix" evidence="29">
    <location>
        <begin position="402"/>
        <end position="409"/>
    </location>
</feature>
<feature type="helix" evidence="28">
    <location>
        <begin position="411"/>
        <end position="415"/>
    </location>
</feature>
<gene>
    <name type="primary">CNR1</name>
    <name type="synonym">CNR</name>
</gene>
<accession>P21554</accession>
<accession>B2R9T4</accession>
<accession>E1P512</accession>
<accession>Q13949</accession>
<accession>Q495Z0</accession>
<accession>Q4PLI4</accession>
<accession>Q4VBM6</accession>
<accession>Q5JVL5</accession>
<accession>Q5UB37</accession>
<accession>Q9UNN0</accession>
<name>CNR1_HUMAN</name>
<comment type="function">
    <text evidence="1 3 8 9 10 14 15 16 17">G-protein coupled receptor for endogenous cannabinoids (eCBs), including N-arachidonoylethanolamide (also called anandamide or AEA) and 2-arachidonoylglycerol (2-AG), as well as phytocannabinoids, such as delta(9)-tetrahydrocannabinol (THC) (PubMed:15620723, PubMed:27768894, PubMed:27851727). Mediates many cannabinoid-induced effects, acting, among others, on food intake, memory loss, gastrointestinal motility, catalepsy, ambulatory activity, anxiety, chronic pain. Signaling typically involves reduction in cyclic AMP (PubMed:1718258, PubMed:21895628, PubMed:27768894). In the hypothalamus, may have a dual effect on mitochondrial respiration depending upon the agonist dose and possibly upon the cell type. Increases respiration at low doses, while decreases respiration at high doses. At high doses, CNR1 signal transduction involves G-protein alpha-i protein activation and subsequent inhibition of mitochondrial soluble adenylate cyclase, decrease in cyclic AMP concentration, inhibition of protein kinase A (PKA)-dependent phosphorylation of specific subunits of the mitochondrial electron transport system, including NDUFS2. In the hypothalamus, inhibits leptin-induced reactive oxygen species (ROS) formation and mediates cannabinoid-induced increase in SREBF1 and FASN gene expression. In response to cannabinoids, drives the release of orexigenic beta-endorphin, but not that of melanocyte-stimulating hormone alpha/alpha-MSH, from hypothalamic POMC neurons, hence promoting food intake. In the hippocampus, regulates cellular respiration and energy production in response to cannabinoids. Involved in cannabinoid-dependent depolarization-induced suppression of inhibition (DSI), a process in which depolarization of CA1 postsynaptic pyramidal neurons mobilizes eCBs, which retrogradely activate presynaptic CB1 receptors, transiently decreasing GABAergic inhibitory neurotransmission. Also reduces excitatory synaptic transmission (By similarity). In superior cervical ganglions and cerebral vascular smooth muscle cells, inhibits voltage-gated Ca(2+) channels in a constitutive, as well as agonist-dependent manner (PubMed:17895407). In cerebral vascular smooth muscle cells, cannabinoid-induced inhibition of voltage-gated Ca(2+) channels leads to vasodilation and decreased vascular tone (By similarity). Induces leptin production in adipocytes and reduces LRP2-mediated leptin clearance in the kidney, hence participating in hyperleptinemia. In adipose tissue, CNR1 signaling leads to increased expression of SREBF1, ACACA and FASN genes (By similarity). In the liver, activation by endocannabinoids leads to increased de novo lipogenesis and reduced fatty acid catabolism, associated with increased expression of SREBF1/SREBP-1, GCK, ACACA, ACACB and FASN genes. May also affect de novo cholesterol synthesis and HDL-cholesteryl ether uptake. Peripherally modulates energy metabolism (By similarity). In high carbohydrate diet-induced obesity, may decrease the expression of mitochondrial dihydrolipoyl dehydrogenase/DLD in striated muscles, as well as that of selected glucose/ pyruvate metabolic enzymes, hence affecting energy expenditure through mitochondrial metabolism (By similarity). In response to cannabinoid anandamide, elicits a pro-inflammatory response in macrophages, which involves NLRP3 inflammasome activation and IL1B and IL18 secretion (By similarity). In macrophages infiltrating pancreatic islets, this process may participate in the progression of type-2 diabetes and associated loss of pancreatic beta-cells (PubMed:23955712).</text>
</comment>
<comment type="function">
    <molecule>Isoform 1</molecule>
    <text evidence="8">Binds both 2-arachidonoylglycerol (2-AG) and anandamide.</text>
</comment>
<comment type="function">
    <molecule>Isoform 2</molecule>
    <text evidence="8">Only binds 2-arachidonoylglycerol (2-AG) with high affinity. Contrary to its effect on isoform 1, 2-AG behaves as an inverse agonist on isoform 2 in assays measuring GTP binding to membranes.</text>
</comment>
<comment type="function">
    <molecule>Isoform 3</molecule>
    <text evidence="8">Only binds 2-arachidonoylglycerol (2-AG) with high affinity. Contrary to its effect on isoform 1, 2-AG behaves as an inverse agonist on isoform 3 in assays measuring GTP binding to membranes.</text>
</comment>
<comment type="activity regulation">
    <text evidence="11">Hemopressin, a peptide derived from hemoglobin subunit alpha (HBA1 and/or HBA2), acts as an antagonist peptide: hemopressin-binding efficiently blocks cannabinoid receptor CNR1 and subsequent signaling.</text>
</comment>
<comment type="subunit">
    <text evidence="7 10">Interacts (via C-terminus) with CNRIP1; this interaction attenuates constitutive, but not agonist-dependent, inhibition of voltage-gated Ca(2+) channels in neurons (PubMed:17895407). Associates with G protein alpha subunits, including G(i) alpha-1/GNAI1, G(i) alpha-3/GNAI3 and G(o)-alpha/GNAO1; palmitoylation is important for interaction with GNAI3 and GNAO1 (PubMed:12237474).</text>
</comment>
<comment type="interaction">
    <interactant intactId="EBI-2909859">
        <id>P21554</id>
    </interactant>
    <interactant intactId="EBI-2902702">
        <id>P29274</id>
        <label>ADORA2A</label>
    </interactant>
    <organismsDiffer>false</organismsDiffer>
    <experiments>8</experiments>
</comment>
<comment type="interaction">
    <interactant intactId="EBI-2909859">
        <id>P21554</id>
    </interactant>
    <interactant intactId="EBI-2909859">
        <id>P21554</id>
        <label>CNR1</label>
    </interactant>
    <organismsDiffer>false</organismsDiffer>
    <experiments>8</experiments>
</comment>
<comment type="subcellular location">
    <subcellularLocation>
        <location evidence="14">Cell membrane</location>
        <topology evidence="16 17">Multi-pass membrane protein</topology>
    </subcellularLocation>
    <subcellularLocation>
        <location evidence="14">Membrane raft</location>
    </subcellularLocation>
    <subcellularLocation>
        <location evidence="3">Mitochondrion outer membrane</location>
    </subcellularLocation>
    <subcellularLocation>
        <location evidence="2">Cell projection</location>
        <location evidence="2">Axon</location>
    </subcellularLocation>
    <subcellularLocation>
        <location evidence="2">Presynapse</location>
    </subcellularLocation>
    <text evidence="2 3">Unexpectedly, in the mitochondria, the C-terminus is located in the mitochondrial intermembrane space, a compartment topologically considered as extracellular. In canonical seven-transmembrane G-protein coupled receptors, the C-terminus is cytosolic (By similarity). Found on presynaptic axon terminals in some GABAergic neurons in the somatosensory cortex (By similarity).</text>
</comment>
<comment type="alternative products">
    <event type="alternative splicing"/>
    <isoform>
        <id>P21554-1</id>
        <name>1</name>
        <name>Long</name>
        <sequence type="displayed"/>
    </isoform>
    <isoform>
        <id>P21554-2</id>
        <name>2</name>
        <name evidence="22">CB1a</name>
        <name>Short</name>
        <sequence type="described" ref="VSP_001868"/>
    </isoform>
    <isoform>
        <id>P21554-3</id>
        <name>3</name>
        <name evidence="22">CB1b</name>
        <sequence type="described" ref="VSP_016529"/>
    </isoform>
</comment>
<comment type="tissue specificity">
    <text evidence="8">Widely expressed, with highest levels in fetal and adult brain. Expression levels of isoform 2 and isoform 3 are much lower than those of isoform 1.</text>
</comment>
<comment type="induction">
    <text evidence="15">Up-regulated by endocannabinoid anandamide.</text>
</comment>
<comment type="PTM">
    <text evidence="14">Palmitoylation at Cys-415 is important for recruitment at plasma membrane and lipid rafts and association with G protein alpha subunits.</text>
</comment>
<comment type="disease" evidence="12">
    <disease id="DI-01221">
        <name>Obesity</name>
        <acronym>OBESITY</acronym>
        <description>A condition characterized by an increase of body weight beyond the limitation of skeletal and physical requirements, as the result of excessive accumulation of body fat.</description>
        <dbReference type="MIM" id="601665"/>
    </disease>
    <text evidence="12">The protein represented in this entry may be involved in disease pathogenesis. May contribute to the development of diet-induced obesity and several obesity-associated features, such as dyslipidemia and liver steatosis, regulating peripheral lipogenesis, energy expenditure and feeding behavior. CNR1 inverse agonists have been shown to reduce body weight and improve metabolic abnormalities in obese subjects, although adverse neuropsychiatric effects, including anxiety, irritability, and depressed mood, halted their therapeutic development (PubMed:18177726). In obese mice, peripherally restricted CNR1 inverse agonists have been shown to normalize metabolic abnormalities, including insulin resistance and fatty liver, and to reverse leptin resistance.</text>
</comment>
<comment type="disease">
    <text evidence="6 13 18 19 20 21">Dysfunction of the endogenous cannabinoid system including CNR1 has been implicated in the pathogenesis of a number of central nervous system disorders, including Huntington disease, Parkinson disease, and Alzheimer disease (PubMed:32549916). In post-mortem brains from Huntington disease patients, a progressive CNR1 loss has been observed in the caudate nucleus, putamen, and substantia nigra pars reticulata, and altered expression and abnormal endocannabinoid levels precede motor symptoms in a disease mouse model (PubMed:10828533, PubMed:19524019, PubMed:8255419). In Parkinson disease, low CNR1 expression in mid-superior frontal gyrus and mid-cingulate cortex has been associated with poor mind, poor executive functioning and poor episode memory, while patients with more severe visuospatial dysfunction showed decreased receptor availability in the precuneus, mid-cingulate, supplementary motor cortex, inferior orbitofrontal gyrus and thalamus (PubMed:31342135). In an animal model for Alzheimer disease, CNR1 heterozygous deletion has been associated with decreased levels of postsynaptic density protein 95 (DLG4/PSD95) and accelerated memory impairment, suggesting synaptic dysfunction and a crucial role for CNR1 in the progression of disease symptoms (PubMed:10828533, PubMed:19524019, PubMed:30096288, PubMed:31342135, PubMed:8255419).</text>
</comment>
<comment type="miscellaneous">
    <text evidence="3">High-fat diet also increases the hepatic levels of CNR1 ligand anandamide, but not that of 2-arachidonoylglycerol.</text>
</comment>
<comment type="miscellaneous">
    <molecule>Isoform 2</molecule>
    <text evidence="25">Dubious isoform. A putative downstream initiation AUG is used to produce isoform 2 (PubMed:1718258). The use of the first AUG (same as isoform 1) gives a truncated protein of 36 AA.</text>
</comment>
<comment type="similarity">
    <text evidence="5">Belongs to the G-protein coupled receptor 1 family.</text>
</comment>
<evidence type="ECO:0000250" key="1">
    <source>
        <dbReference type="UniProtKB" id="O02777"/>
    </source>
</evidence>
<evidence type="ECO:0000250" key="2">
    <source>
        <dbReference type="UniProtKB" id="P20272"/>
    </source>
</evidence>
<evidence type="ECO:0000250" key="3">
    <source>
        <dbReference type="UniProtKB" id="P47746"/>
    </source>
</evidence>
<evidence type="ECO:0000255" key="4"/>
<evidence type="ECO:0000255" key="5">
    <source>
        <dbReference type="PROSITE-ProRule" id="PRU00521"/>
    </source>
</evidence>
<evidence type="ECO:0000269" key="6">
    <source>
    </source>
</evidence>
<evidence type="ECO:0000269" key="7">
    <source>
    </source>
</evidence>
<evidence type="ECO:0000269" key="8">
    <source>
    </source>
</evidence>
<evidence type="ECO:0000269" key="9">
    <source>
    </source>
</evidence>
<evidence type="ECO:0000269" key="10">
    <source>
    </source>
</evidence>
<evidence type="ECO:0000269" key="11">
    <source>
    </source>
</evidence>
<evidence type="ECO:0000269" key="12">
    <source>
    </source>
</evidence>
<evidence type="ECO:0000269" key="13">
    <source>
    </source>
</evidence>
<evidence type="ECO:0000269" key="14">
    <source>
    </source>
</evidence>
<evidence type="ECO:0000269" key="15">
    <source>
    </source>
</evidence>
<evidence type="ECO:0000269" key="16">
    <source>
    </source>
</evidence>
<evidence type="ECO:0000269" key="17">
    <source>
    </source>
</evidence>
<evidence type="ECO:0000269" key="18">
    <source>
    </source>
</evidence>
<evidence type="ECO:0000269" key="19">
    <source>
    </source>
</evidence>
<evidence type="ECO:0000269" key="20">
    <source>
    </source>
</evidence>
<evidence type="ECO:0000269" key="21">
    <source>
    </source>
</evidence>
<evidence type="ECO:0000303" key="22">
    <source>
    </source>
</evidence>
<evidence type="ECO:0000303" key="23">
    <source>
    </source>
</evidence>
<evidence type="ECO:0000305" key="24"/>
<evidence type="ECO:0000305" key="25">
    <source>
    </source>
</evidence>
<evidence type="ECO:0007744" key="26">
    <source>
        <dbReference type="PDB" id="5TGZ"/>
    </source>
</evidence>
<evidence type="ECO:0007744" key="27">
    <source>
        <dbReference type="PDB" id="5U09"/>
    </source>
</evidence>
<evidence type="ECO:0007829" key="28">
    <source>
        <dbReference type="PDB" id="2B0Y"/>
    </source>
</evidence>
<evidence type="ECO:0007829" key="29">
    <source>
        <dbReference type="PDB" id="5U09"/>
    </source>
</evidence>
<evidence type="ECO:0007829" key="30">
    <source>
        <dbReference type="PDB" id="6KPG"/>
    </source>
</evidence>
<evidence type="ECO:0007829" key="31">
    <source>
        <dbReference type="PDB" id="7FEE"/>
    </source>
</evidence>
<evidence type="ECO:0007829" key="32">
    <source>
        <dbReference type="PDB" id="8K8J"/>
    </source>
</evidence>
<protein>
    <recommendedName>
        <fullName>Cannabinoid receptor 1</fullName>
        <shortName>CB-R</shortName>
        <shortName>CB1</shortName>
    </recommendedName>
    <alternativeName>
        <fullName>CANN6</fullName>
    </alternativeName>
</protein>
<sequence>MKSILDGLADTTFRTITTDLLYVGSNDIQYEDIKGDMASKLGYFPQKFPLTSFRGSPFQEKMTAGDNPQLVPADQVNITEFYNKSLSSFKENEENIQCGENFMDIECFMVLNPSQQLAIAVLSLTLGTFTVLENLLVLCVILHSRSLRCRPSYHFIGSLAVADLLGSVIFVYSFIDFHVFHRKDSRNVFLFKLGGVTASFTASVGSLFLTAIDRYISIHRPLAYKRIVTRPKAVVAFCLMWTIAIVIAVLPLLGWNCEKLQSVCSDIFPHIDETYLMFWIGVTSVLLLFIVYAYMYILWKAHSHAVRMIQRGTQKSIIIHTSEDGKVQVTRPDQARMDIRLAKTLVLILVVLIICWGPLLAIMVYDVFGKMNKLIKTVFAFCSMLCLLNSTVNPIIYALRSKDLRHAFRSMFPSCEGTAQPLDNSMGDSDCLHKHANNAASVHRAAESCIKSTVKIAKVTMSVSTDTSAEAL</sequence>